<reference key="1">
    <citation type="journal article" date="2006" name="J. Bacteriol.">
        <title>The genome of the obligately intracellular bacterium Ehrlichia canis reveals themes of complex membrane structure and immune evasion strategies.</title>
        <authorList>
            <person name="Mavromatis K."/>
            <person name="Doyle C.K."/>
            <person name="Lykidis A."/>
            <person name="Ivanova N."/>
            <person name="Francino M.P."/>
            <person name="Chain P."/>
            <person name="Shin M."/>
            <person name="Malfatti S."/>
            <person name="Larimer F."/>
            <person name="Copeland A."/>
            <person name="Detter J.C."/>
            <person name="Land M."/>
            <person name="Richardson P.M."/>
            <person name="Yu X.J."/>
            <person name="Walker D.H."/>
            <person name="McBride J.W."/>
            <person name="Kyrpides N.C."/>
        </authorList>
    </citation>
    <scope>NUCLEOTIDE SEQUENCE [LARGE SCALE GENOMIC DNA]</scope>
    <source>
        <strain>Jake</strain>
    </source>
</reference>
<gene>
    <name evidence="1" type="primary">cysS</name>
    <name type="ordered locus">Ecaj_0308</name>
</gene>
<dbReference type="EC" id="6.1.1.16" evidence="1"/>
<dbReference type="EMBL" id="CP000107">
    <property type="protein sequence ID" value="AAZ68352.1"/>
    <property type="molecule type" value="Genomic_DNA"/>
</dbReference>
<dbReference type="RefSeq" id="WP_011304430.1">
    <property type="nucleotide sequence ID" value="NC_007354.1"/>
</dbReference>
<dbReference type="SMR" id="Q3YSF3"/>
<dbReference type="FunCoup" id="Q3YSF3">
    <property type="interactions" value="299"/>
</dbReference>
<dbReference type="STRING" id="269484.Ecaj_0308"/>
<dbReference type="KEGG" id="ecn:Ecaj_0308"/>
<dbReference type="eggNOG" id="COG0215">
    <property type="taxonomic scope" value="Bacteria"/>
</dbReference>
<dbReference type="HOGENOM" id="CLU_013528_0_1_5"/>
<dbReference type="InParanoid" id="Q3YSF3"/>
<dbReference type="Proteomes" id="UP000000435">
    <property type="component" value="Chromosome"/>
</dbReference>
<dbReference type="GO" id="GO:0005829">
    <property type="term" value="C:cytosol"/>
    <property type="evidence" value="ECO:0007669"/>
    <property type="project" value="TreeGrafter"/>
</dbReference>
<dbReference type="GO" id="GO:0005524">
    <property type="term" value="F:ATP binding"/>
    <property type="evidence" value="ECO:0007669"/>
    <property type="project" value="UniProtKB-UniRule"/>
</dbReference>
<dbReference type="GO" id="GO:0004817">
    <property type="term" value="F:cysteine-tRNA ligase activity"/>
    <property type="evidence" value="ECO:0007669"/>
    <property type="project" value="UniProtKB-UniRule"/>
</dbReference>
<dbReference type="GO" id="GO:0008270">
    <property type="term" value="F:zinc ion binding"/>
    <property type="evidence" value="ECO:0007669"/>
    <property type="project" value="UniProtKB-UniRule"/>
</dbReference>
<dbReference type="GO" id="GO:0006423">
    <property type="term" value="P:cysteinyl-tRNA aminoacylation"/>
    <property type="evidence" value="ECO:0007669"/>
    <property type="project" value="UniProtKB-UniRule"/>
</dbReference>
<dbReference type="CDD" id="cd00672">
    <property type="entry name" value="CysRS_core"/>
    <property type="match status" value="1"/>
</dbReference>
<dbReference type="Gene3D" id="1.20.120.1910">
    <property type="entry name" value="Cysteine-tRNA ligase, C-terminal anti-codon recognition domain"/>
    <property type="match status" value="1"/>
</dbReference>
<dbReference type="Gene3D" id="3.40.50.620">
    <property type="entry name" value="HUPs"/>
    <property type="match status" value="1"/>
</dbReference>
<dbReference type="HAMAP" id="MF_00041">
    <property type="entry name" value="Cys_tRNA_synth"/>
    <property type="match status" value="1"/>
</dbReference>
<dbReference type="InterPro" id="IPR015803">
    <property type="entry name" value="Cys-tRNA-ligase"/>
</dbReference>
<dbReference type="InterPro" id="IPR015273">
    <property type="entry name" value="Cys-tRNA-synt_Ia_DALR"/>
</dbReference>
<dbReference type="InterPro" id="IPR024909">
    <property type="entry name" value="Cys-tRNA/MSH_ligase"/>
</dbReference>
<dbReference type="InterPro" id="IPR056411">
    <property type="entry name" value="CysS_C"/>
</dbReference>
<dbReference type="InterPro" id="IPR014729">
    <property type="entry name" value="Rossmann-like_a/b/a_fold"/>
</dbReference>
<dbReference type="InterPro" id="IPR032678">
    <property type="entry name" value="tRNA-synt_1_cat_dom"/>
</dbReference>
<dbReference type="InterPro" id="IPR009080">
    <property type="entry name" value="tRNAsynth_Ia_anticodon-bd"/>
</dbReference>
<dbReference type="NCBIfam" id="TIGR00435">
    <property type="entry name" value="cysS"/>
    <property type="match status" value="1"/>
</dbReference>
<dbReference type="PANTHER" id="PTHR10890:SF3">
    <property type="entry name" value="CYSTEINE--TRNA LIGASE, CYTOPLASMIC"/>
    <property type="match status" value="1"/>
</dbReference>
<dbReference type="PANTHER" id="PTHR10890">
    <property type="entry name" value="CYSTEINYL-TRNA SYNTHETASE"/>
    <property type="match status" value="1"/>
</dbReference>
<dbReference type="Pfam" id="PF23493">
    <property type="entry name" value="CysS_C"/>
    <property type="match status" value="1"/>
</dbReference>
<dbReference type="Pfam" id="PF09190">
    <property type="entry name" value="DALR_2"/>
    <property type="match status" value="1"/>
</dbReference>
<dbReference type="Pfam" id="PF01406">
    <property type="entry name" value="tRNA-synt_1e"/>
    <property type="match status" value="1"/>
</dbReference>
<dbReference type="PRINTS" id="PR00983">
    <property type="entry name" value="TRNASYNTHCYS"/>
</dbReference>
<dbReference type="SMART" id="SM00840">
    <property type="entry name" value="DALR_2"/>
    <property type="match status" value="1"/>
</dbReference>
<dbReference type="SUPFAM" id="SSF47323">
    <property type="entry name" value="Anticodon-binding domain of a subclass of class I aminoacyl-tRNA synthetases"/>
    <property type="match status" value="1"/>
</dbReference>
<dbReference type="SUPFAM" id="SSF52374">
    <property type="entry name" value="Nucleotidylyl transferase"/>
    <property type="match status" value="1"/>
</dbReference>
<name>SYC_EHRCJ</name>
<accession>Q3YSF3</accession>
<keyword id="KW-0030">Aminoacyl-tRNA synthetase</keyword>
<keyword id="KW-0067">ATP-binding</keyword>
<keyword id="KW-0963">Cytoplasm</keyword>
<keyword id="KW-0436">Ligase</keyword>
<keyword id="KW-0479">Metal-binding</keyword>
<keyword id="KW-0547">Nucleotide-binding</keyword>
<keyword id="KW-0648">Protein biosynthesis</keyword>
<keyword id="KW-0862">Zinc</keyword>
<proteinExistence type="inferred from homology"/>
<comment type="catalytic activity">
    <reaction evidence="1">
        <text>tRNA(Cys) + L-cysteine + ATP = L-cysteinyl-tRNA(Cys) + AMP + diphosphate</text>
        <dbReference type="Rhea" id="RHEA:17773"/>
        <dbReference type="Rhea" id="RHEA-COMP:9661"/>
        <dbReference type="Rhea" id="RHEA-COMP:9679"/>
        <dbReference type="ChEBI" id="CHEBI:30616"/>
        <dbReference type="ChEBI" id="CHEBI:33019"/>
        <dbReference type="ChEBI" id="CHEBI:35235"/>
        <dbReference type="ChEBI" id="CHEBI:78442"/>
        <dbReference type="ChEBI" id="CHEBI:78517"/>
        <dbReference type="ChEBI" id="CHEBI:456215"/>
        <dbReference type="EC" id="6.1.1.16"/>
    </reaction>
</comment>
<comment type="cofactor">
    <cofactor evidence="1">
        <name>Zn(2+)</name>
        <dbReference type="ChEBI" id="CHEBI:29105"/>
    </cofactor>
    <text evidence="1">Binds 1 zinc ion per subunit.</text>
</comment>
<comment type="subunit">
    <text evidence="1">Monomer.</text>
</comment>
<comment type="subcellular location">
    <subcellularLocation>
        <location evidence="1">Cytoplasm</location>
    </subcellularLocation>
</comment>
<comment type="similarity">
    <text evidence="1">Belongs to the class-I aminoacyl-tRNA synthetase family.</text>
</comment>
<feature type="chain" id="PRO_0000240910" description="Cysteine--tRNA ligase">
    <location>
        <begin position="1"/>
        <end position="459"/>
    </location>
</feature>
<feature type="short sequence motif" description="'HIGH' region">
    <location>
        <begin position="29"/>
        <end position="39"/>
    </location>
</feature>
<feature type="short sequence motif" description="'KMSKS' region">
    <location>
        <begin position="269"/>
        <end position="273"/>
    </location>
</feature>
<feature type="binding site" evidence="1">
    <location>
        <position position="27"/>
    </location>
    <ligand>
        <name>Zn(2+)</name>
        <dbReference type="ChEBI" id="CHEBI:29105"/>
    </ligand>
</feature>
<feature type="binding site" evidence="1">
    <location>
        <position position="211"/>
    </location>
    <ligand>
        <name>Zn(2+)</name>
        <dbReference type="ChEBI" id="CHEBI:29105"/>
    </ligand>
</feature>
<feature type="binding site" evidence="1">
    <location>
        <position position="236"/>
    </location>
    <ligand>
        <name>Zn(2+)</name>
        <dbReference type="ChEBI" id="CHEBI:29105"/>
    </ligand>
</feature>
<feature type="binding site" evidence="1">
    <location>
        <position position="240"/>
    </location>
    <ligand>
        <name>Zn(2+)</name>
        <dbReference type="ChEBI" id="CHEBI:29105"/>
    </ligand>
</feature>
<feature type="binding site" evidence="1">
    <location>
        <position position="272"/>
    </location>
    <ligand>
        <name>ATP</name>
        <dbReference type="ChEBI" id="CHEBI:30616"/>
    </ligand>
</feature>
<evidence type="ECO:0000255" key="1">
    <source>
        <dbReference type="HAMAP-Rule" id="MF_00041"/>
    </source>
</evidence>
<protein>
    <recommendedName>
        <fullName evidence="1">Cysteine--tRNA ligase</fullName>
        <ecNumber evidence="1">6.1.1.16</ecNumber>
    </recommendedName>
    <alternativeName>
        <fullName evidence="1">Cysteinyl-tRNA synthetase</fullName>
        <shortName evidence="1">CysRS</shortName>
    </alternativeName>
</protein>
<organism>
    <name type="scientific">Ehrlichia canis (strain Jake)</name>
    <dbReference type="NCBI Taxonomy" id="269484"/>
    <lineage>
        <taxon>Bacteria</taxon>
        <taxon>Pseudomonadati</taxon>
        <taxon>Pseudomonadota</taxon>
        <taxon>Alphaproteobacteria</taxon>
        <taxon>Rickettsiales</taxon>
        <taxon>Anaplasmataceae</taxon>
        <taxon>Ehrlichia</taxon>
    </lineage>
</organism>
<sequence>MIIYNTLTGIKEPFIPLNVDNIKVYVCGPTVYNFVHIGNARSIVIYDVLFRLLKLLYPSVTYVRNITDIDDKIINVAQSNGQNICEVTSVYIKAFHEDMKMLNCLEPTYEPKATDNINVMINLIQKLIDHGHAYVDNATVFFNVESYPSYGQLSKRNIKELIYGSRVDIELGKKHPGDFVLWKPATEVDNKLMSCWPSPWGLGRPGWHIECSAMSYCYLSENFDIHGGGADLQFPHHENEIAQSCCAFPGSYYAKYWIHNGFLTVNGEKMSKSLGNVLTVRQLLESGVKGELIRYVLLNTHYRKPLDWFNMTLVSAQESLNRMYTALSSVNVDLSLDDDVELSSDVVDCLKDDINTPKAISVLHEMVTEINKTSDVMKKTSLAKTLIKTANFLGILQHSWQDWFRVNENDQEIDKLIDERRIARANNDFKKADDIRQLLLSKGIVLSDNKDGTTHWYKK</sequence>